<comment type="function">
    <text evidence="1">Catalyzes the hydrolysis of inorganic pyrophosphate (PPi) forming two phosphate ions.</text>
</comment>
<comment type="catalytic activity">
    <reaction evidence="1">
        <text>diphosphate + H2O = 2 phosphate + H(+)</text>
        <dbReference type="Rhea" id="RHEA:24576"/>
        <dbReference type="ChEBI" id="CHEBI:15377"/>
        <dbReference type="ChEBI" id="CHEBI:15378"/>
        <dbReference type="ChEBI" id="CHEBI:33019"/>
        <dbReference type="ChEBI" id="CHEBI:43474"/>
        <dbReference type="EC" id="3.6.1.1"/>
    </reaction>
</comment>
<comment type="cofactor">
    <cofactor evidence="1">
        <name>Mg(2+)</name>
        <dbReference type="ChEBI" id="CHEBI:18420"/>
    </cofactor>
</comment>
<comment type="subunit">
    <text evidence="1">Homohexamer.</text>
</comment>
<comment type="subcellular location">
    <subcellularLocation>
        <location evidence="1">Cytoplasm</location>
    </subcellularLocation>
</comment>
<comment type="similarity">
    <text evidence="1">Belongs to the PPase family.</text>
</comment>
<keyword id="KW-0002">3D-structure</keyword>
<keyword id="KW-0963">Cytoplasm</keyword>
<keyword id="KW-0903">Direct protein sequencing</keyword>
<keyword id="KW-0378">Hydrolase</keyword>
<keyword id="KW-0460">Magnesium</keyword>
<keyword id="KW-0479">Metal-binding</keyword>
<keyword id="KW-1185">Reference proteome</keyword>
<feature type="initiator methionine" description="Removed">
    <location>
        <position position="1"/>
    </location>
</feature>
<feature type="chain" id="PRO_0000137535" description="Inorganic pyrophosphatase">
    <location>
        <begin position="2"/>
        <end position="175"/>
    </location>
</feature>
<feature type="binding site" evidence="1">
    <location>
        <position position="30"/>
    </location>
    <ligand>
        <name>substrate</name>
    </ligand>
</feature>
<feature type="binding site" evidence="1">
    <location>
        <position position="44"/>
    </location>
    <ligand>
        <name>substrate</name>
    </ligand>
</feature>
<feature type="binding site" evidence="1">
    <location>
        <position position="56"/>
    </location>
    <ligand>
        <name>substrate</name>
    </ligand>
</feature>
<feature type="binding site" evidence="1">
    <location>
        <position position="66"/>
    </location>
    <ligand>
        <name>Mg(2+)</name>
        <dbReference type="ChEBI" id="CHEBI:18420"/>
        <label>1</label>
    </ligand>
</feature>
<feature type="binding site" evidence="1">
    <location>
        <position position="71"/>
    </location>
    <ligand>
        <name>Mg(2+)</name>
        <dbReference type="ChEBI" id="CHEBI:18420"/>
        <label>1</label>
    </ligand>
</feature>
<feature type="binding site" evidence="1">
    <location>
        <position position="71"/>
    </location>
    <ligand>
        <name>Mg(2+)</name>
        <dbReference type="ChEBI" id="CHEBI:18420"/>
        <label>2</label>
    </ligand>
</feature>
<feature type="binding site" evidence="1">
    <location>
        <position position="103"/>
    </location>
    <ligand>
        <name>Mg(2+)</name>
        <dbReference type="ChEBI" id="CHEBI:18420"/>
        <label>1</label>
    </ligand>
</feature>
<feature type="binding site" evidence="1">
    <location>
        <position position="140"/>
    </location>
    <ligand>
        <name>substrate</name>
    </ligand>
</feature>
<feature type="helix" evidence="2">
    <location>
        <begin position="4"/>
        <end position="6"/>
    </location>
</feature>
<feature type="turn" evidence="2">
    <location>
        <begin position="11"/>
        <end position="15"/>
    </location>
</feature>
<feature type="strand" evidence="2">
    <location>
        <begin position="16"/>
        <end position="23"/>
    </location>
</feature>
<feature type="strand" evidence="2">
    <location>
        <begin position="29"/>
        <end position="34"/>
    </location>
</feature>
<feature type="turn" evidence="2">
    <location>
        <begin position="35"/>
        <end position="38"/>
    </location>
</feature>
<feature type="strand" evidence="2">
    <location>
        <begin position="39"/>
        <end position="45"/>
    </location>
</feature>
<feature type="strand" evidence="2">
    <location>
        <begin position="47"/>
        <end position="49"/>
    </location>
</feature>
<feature type="strand" evidence="2">
    <location>
        <begin position="53"/>
        <end position="58"/>
    </location>
</feature>
<feature type="strand" evidence="2">
    <location>
        <begin position="71"/>
        <end position="75"/>
    </location>
</feature>
<feature type="strand" evidence="2">
    <location>
        <begin position="85"/>
        <end position="100"/>
    </location>
</feature>
<feature type="strand" evidence="2">
    <location>
        <begin position="102"/>
        <end position="110"/>
    </location>
</feature>
<feature type="helix" evidence="2">
    <location>
        <begin position="114"/>
        <end position="116"/>
    </location>
</feature>
<feature type="helix" evidence="2">
    <location>
        <begin position="122"/>
        <end position="124"/>
    </location>
</feature>
<feature type="helix" evidence="2">
    <location>
        <begin position="127"/>
        <end position="139"/>
    </location>
</feature>
<feature type="helix" evidence="2">
    <location>
        <begin position="142"/>
        <end position="147"/>
    </location>
</feature>
<feature type="strand" evidence="2">
    <location>
        <begin position="151"/>
        <end position="157"/>
    </location>
</feature>
<feature type="helix" evidence="2">
    <location>
        <begin position="159"/>
        <end position="174"/>
    </location>
</feature>
<protein>
    <recommendedName>
        <fullName evidence="1">Inorganic pyrophosphatase</fullName>
        <ecNumber evidence="1">3.6.1.1</ecNumber>
    </recommendedName>
    <alternativeName>
        <fullName evidence="1">Pyrophosphate phospho-hydrolase</fullName>
        <shortName evidence="1">PPase</shortName>
    </alternativeName>
</protein>
<reference key="1">
    <citation type="journal article" date="1998" name="J. Biochem.">
        <title>Molecular cloning, expression, and site-directed mutagenesis of inorganic pyrophosphatase from Thermus thermophilus HB8.</title>
        <authorList>
            <person name="Satoh T."/>
            <person name="Samejima T."/>
            <person name="Watanabe M."/>
            <person name="Nogi S."/>
            <person name="Takahashi Y."/>
            <person name="Kaji H."/>
            <person name="Teplyakov A."/>
            <person name="Obmolova G."/>
            <person name="Kuranova I."/>
            <person name="Ishii K."/>
        </authorList>
    </citation>
    <scope>NUCLEOTIDE SEQUENCE [GENOMIC DNA]</scope>
    <scope>PARTIAL PROTEIN SEQUENCE</scope>
</reference>
<reference key="2">
    <citation type="submission" date="2004-11" db="EMBL/GenBank/DDBJ databases">
        <title>Complete genome sequence of Thermus thermophilus HB8.</title>
        <authorList>
            <person name="Masui R."/>
            <person name="Kurokawa K."/>
            <person name="Nakagawa N."/>
            <person name="Tokunaga F."/>
            <person name="Koyama Y."/>
            <person name="Shibata T."/>
            <person name="Oshima T."/>
            <person name="Yokoyama S."/>
            <person name="Yasunaga T."/>
            <person name="Kuramitsu S."/>
        </authorList>
    </citation>
    <scope>NUCLEOTIDE SEQUENCE [LARGE SCALE GENOMIC DNA]</scope>
    <source>
        <strain>ATCC 27634 / DSM 579 / HB8</strain>
    </source>
</reference>
<reference key="3">
    <citation type="journal article" date="1994" name="Protein Sci.">
        <title>Crystal structure of inorganic pyrophosphatase from Thermus thermophilus.</title>
        <authorList>
            <person name="Teplyakov A."/>
            <person name="Obmolova G."/>
            <person name="Wilson K.S."/>
            <person name="Ishii K."/>
            <person name="Kaji H."/>
            <person name="Samejima T."/>
            <person name="Kuranova I."/>
        </authorList>
    </citation>
    <scope>X-RAY CRYSTALLOGRAPHY (2.0 ANGSTROMS)</scope>
</reference>
<gene>
    <name evidence="1" type="primary">ppa</name>
    <name type="ordered locus">TTHA1965</name>
</gene>
<name>IPYR_THET8</name>
<organism>
    <name type="scientific">Thermus thermophilus (strain ATCC 27634 / DSM 579 / HB8)</name>
    <dbReference type="NCBI Taxonomy" id="300852"/>
    <lineage>
        <taxon>Bacteria</taxon>
        <taxon>Thermotogati</taxon>
        <taxon>Deinococcota</taxon>
        <taxon>Deinococci</taxon>
        <taxon>Thermales</taxon>
        <taxon>Thermaceae</taxon>
        <taxon>Thermus</taxon>
    </lineage>
</organism>
<evidence type="ECO:0000255" key="1">
    <source>
        <dbReference type="HAMAP-Rule" id="MF_00209"/>
    </source>
</evidence>
<evidence type="ECO:0007829" key="2">
    <source>
        <dbReference type="PDB" id="2PRD"/>
    </source>
</evidence>
<sequence length="175" mass="19216">MANLKSLPVGDKAPEVVHMVIEVPRGSGNKYEYDPDLGAIKLDRVLPGAQFYPGDYGFIPSTLAEDGDPLDGLVLSTYPLLPGVVVEVRVVGLLLMEDEKGGDAKVIGVVAEDQRLDHIQDIGDVPEGVKQEIQHFFETYKALEAKKGKWVKVTGWRDRKAALEEVRACIARYKG</sequence>
<dbReference type="EC" id="3.6.1.1" evidence="1"/>
<dbReference type="EMBL" id="AB010580">
    <property type="protein sequence ID" value="BAA24521.1"/>
    <property type="molecule type" value="Genomic_DNA"/>
</dbReference>
<dbReference type="EMBL" id="AP008226">
    <property type="protein sequence ID" value="BAD71788.1"/>
    <property type="molecule type" value="Genomic_DNA"/>
</dbReference>
<dbReference type="RefSeq" id="WP_011173971.1">
    <property type="nucleotide sequence ID" value="NC_006461.1"/>
</dbReference>
<dbReference type="RefSeq" id="YP_145231.1">
    <property type="nucleotide sequence ID" value="NC_006461.1"/>
</dbReference>
<dbReference type="PDB" id="2PRD">
    <property type="method" value="X-ray"/>
    <property type="resolution" value="2.00 A"/>
    <property type="chains" value="A=2-175"/>
</dbReference>
<dbReference type="PDBsum" id="2PRD"/>
<dbReference type="SMR" id="P38576"/>
<dbReference type="EnsemblBacteria" id="BAD71788">
    <property type="protein sequence ID" value="BAD71788"/>
    <property type="gene ID" value="BAD71788"/>
</dbReference>
<dbReference type="GeneID" id="3169724"/>
<dbReference type="KEGG" id="ttj:TTHA1965"/>
<dbReference type="PATRIC" id="fig|300852.9.peg.1936"/>
<dbReference type="eggNOG" id="COG0221">
    <property type="taxonomic scope" value="Bacteria"/>
</dbReference>
<dbReference type="HOGENOM" id="CLU_073198_1_2_0"/>
<dbReference type="PhylomeDB" id="P38576"/>
<dbReference type="BRENDA" id="3.6.1.1">
    <property type="organism ID" value="2305"/>
</dbReference>
<dbReference type="EvolutionaryTrace" id="P38576"/>
<dbReference type="Proteomes" id="UP000000532">
    <property type="component" value="Chromosome"/>
</dbReference>
<dbReference type="GO" id="GO:0005737">
    <property type="term" value="C:cytoplasm"/>
    <property type="evidence" value="ECO:0007669"/>
    <property type="project" value="UniProtKB-SubCell"/>
</dbReference>
<dbReference type="GO" id="GO:0004427">
    <property type="term" value="F:inorganic diphosphate phosphatase activity"/>
    <property type="evidence" value="ECO:0007669"/>
    <property type="project" value="UniProtKB-UniRule"/>
</dbReference>
<dbReference type="GO" id="GO:0000287">
    <property type="term" value="F:magnesium ion binding"/>
    <property type="evidence" value="ECO:0007669"/>
    <property type="project" value="UniProtKB-UniRule"/>
</dbReference>
<dbReference type="GO" id="GO:0006796">
    <property type="term" value="P:phosphate-containing compound metabolic process"/>
    <property type="evidence" value="ECO:0007669"/>
    <property type="project" value="InterPro"/>
</dbReference>
<dbReference type="CDD" id="cd00412">
    <property type="entry name" value="pyrophosphatase"/>
    <property type="match status" value="1"/>
</dbReference>
<dbReference type="FunFam" id="3.90.80.10:FF:000003">
    <property type="entry name" value="Inorganic pyrophosphatase"/>
    <property type="match status" value="1"/>
</dbReference>
<dbReference type="Gene3D" id="3.90.80.10">
    <property type="entry name" value="Inorganic pyrophosphatase"/>
    <property type="match status" value="1"/>
</dbReference>
<dbReference type="HAMAP" id="MF_00209">
    <property type="entry name" value="Inorganic_PPase"/>
    <property type="match status" value="1"/>
</dbReference>
<dbReference type="InterPro" id="IPR008162">
    <property type="entry name" value="Pyrophosphatase"/>
</dbReference>
<dbReference type="InterPro" id="IPR036649">
    <property type="entry name" value="Pyrophosphatase_sf"/>
</dbReference>
<dbReference type="PANTHER" id="PTHR10286">
    <property type="entry name" value="INORGANIC PYROPHOSPHATASE"/>
    <property type="match status" value="1"/>
</dbReference>
<dbReference type="Pfam" id="PF00719">
    <property type="entry name" value="Pyrophosphatase"/>
    <property type="match status" value="1"/>
</dbReference>
<dbReference type="SUPFAM" id="SSF50324">
    <property type="entry name" value="Inorganic pyrophosphatase"/>
    <property type="match status" value="1"/>
</dbReference>
<dbReference type="PROSITE" id="PS00387">
    <property type="entry name" value="PPASE"/>
    <property type="match status" value="1"/>
</dbReference>
<accession>P38576</accession>
<accession>Q5SGW5</accession>
<proteinExistence type="evidence at protein level"/>